<keyword id="KW-0963">Cytoplasm</keyword>
<keyword id="KW-0539">Nucleus</keyword>
<keyword id="KW-1185">Reference proteome</keyword>
<dbReference type="EMBL" id="CU329671">
    <property type="protein sequence ID" value="CAA17046.1"/>
    <property type="molecule type" value="Genomic_DNA"/>
</dbReference>
<dbReference type="PIR" id="T40644">
    <property type="entry name" value="T40644"/>
</dbReference>
<dbReference type="BioGRID" id="277619">
    <property type="interactions" value="19"/>
</dbReference>
<dbReference type="FunCoup" id="O43067">
    <property type="interactions" value="420"/>
</dbReference>
<dbReference type="PaxDb" id="4896-SPBC6B1.03c.1"/>
<dbReference type="EnsemblFungi" id="SPBC6B1.03c.1">
    <property type="protein sequence ID" value="SPBC6B1.03c.1:pep"/>
    <property type="gene ID" value="SPBC6B1.03c"/>
</dbReference>
<dbReference type="KEGG" id="spo:2541104"/>
<dbReference type="PomBase" id="SPBC6B1.03c"/>
<dbReference type="VEuPathDB" id="FungiDB:SPBC6B1.03c"/>
<dbReference type="HOGENOM" id="CLU_1023626_0_0_1"/>
<dbReference type="InParanoid" id="O43067"/>
<dbReference type="PRO" id="PR:O43067"/>
<dbReference type="Proteomes" id="UP000002485">
    <property type="component" value="Chromosome II"/>
</dbReference>
<dbReference type="GO" id="GO:0032153">
    <property type="term" value="C:cell division site"/>
    <property type="evidence" value="ECO:0007005"/>
    <property type="project" value="PomBase"/>
</dbReference>
<dbReference type="GO" id="GO:0051286">
    <property type="term" value="C:cell tip"/>
    <property type="evidence" value="ECO:0007005"/>
    <property type="project" value="PomBase"/>
</dbReference>
<dbReference type="GO" id="GO:0005737">
    <property type="term" value="C:cytoplasm"/>
    <property type="evidence" value="ECO:0000318"/>
    <property type="project" value="GO_Central"/>
</dbReference>
<dbReference type="GO" id="GO:0005829">
    <property type="term" value="C:cytosol"/>
    <property type="evidence" value="ECO:0007005"/>
    <property type="project" value="PomBase"/>
</dbReference>
<dbReference type="GO" id="GO:0005634">
    <property type="term" value="C:nucleus"/>
    <property type="evidence" value="ECO:0007005"/>
    <property type="project" value="PomBase"/>
</dbReference>
<dbReference type="GO" id="GO:0072583">
    <property type="term" value="P:clathrin-dependent endocytosis"/>
    <property type="evidence" value="ECO:0000266"/>
    <property type="project" value="PomBase"/>
</dbReference>
<dbReference type="InterPro" id="IPR013226">
    <property type="entry name" value="Pal1"/>
</dbReference>
<dbReference type="PANTHER" id="PTHR28307">
    <property type="entry name" value="PROTEIN PAL1"/>
    <property type="match status" value="1"/>
</dbReference>
<dbReference type="PANTHER" id="PTHR28307:SF2">
    <property type="entry name" value="PROTEIN PAL1"/>
    <property type="match status" value="1"/>
</dbReference>
<dbReference type="Pfam" id="PF08316">
    <property type="entry name" value="Pal1"/>
    <property type="match status" value="1"/>
</dbReference>
<accession>O43067</accession>
<sequence>MGKNNPFVHSNANFPPLQTHNFEDIPEKGYTIFSSPRIDVFNEERPHSGINLNQYQHHEDDAELQSNNPFLNKDSGVDLLKLHSRSNSRIYEAKPKRVIKPKIAIIECNEMAENPPFWNQNKAFERKVSSKESFNMLGYDKIDKLDSSNSYLGDFGVHHDGPFDPCSKHRNLDAATSPIAAFSSQSEANSLPAFLLPNNSKGVEKSEENEDGVTDNDSSNVNSSTNESPNPTDINVCSNDDATDNTENNLKKKASFIYRLRKHLKRNSIETE</sequence>
<evidence type="ECO:0000256" key="1">
    <source>
        <dbReference type="SAM" id="MobiDB-lite"/>
    </source>
</evidence>
<evidence type="ECO:0000269" key="2">
    <source>
    </source>
</evidence>
<evidence type="ECO:0000305" key="3"/>
<reference key="1">
    <citation type="journal article" date="2002" name="Nature">
        <title>The genome sequence of Schizosaccharomyces pombe.</title>
        <authorList>
            <person name="Wood V."/>
            <person name="Gwilliam R."/>
            <person name="Rajandream M.A."/>
            <person name="Lyne M.H."/>
            <person name="Lyne R."/>
            <person name="Stewart A."/>
            <person name="Sgouros J.G."/>
            <person name="Peat N."/>
            <person name="Hayles J."/>
            <person name="Baker S.G."/>
            <person name="Basham D."/>
            <person name="Bowman S."/>
            <person name="Brooks K."/>
            <person name="Brown D."/>
            <person name="Brown S."/>
            <person name="Chillingworth T."/>
            <person name="Churcher C.M."/>
            <person name="Collins M."/>
            <person name="Connor R."/>
            <person name="Cronin A."/>
            <person name="Davis P."/>
            <person name="Feltwell T."/>
            <person name="Fraser A."/>
            <person name="Gentles S."/>
            <person name="Goble A."/>
            <person name="Hamlin N."/>
            <person name="Harris D.E."/>
            <person name="Hidalgo J."/>
            <person name="Hodgson G."/>
            <person name="Holroyd S."/>
            <person name="Hornsby T."/>
            <person name="Howarth S."/>
            <person name="Huckle E.J."/>
            <person name="Hunt S."/>
            <person name="Jagels K."/>
            <person name="James K.D."/>
            <person name="Jones L."/>
            <person name="Jones M."/>
            <person name="Leather S."/>
            <person name="McDonald S."/>
            <person name="McLean J."/>
            <person name="Mooney P."/>
            <person name="Moule S."/>
            <person name="Mungall K.L."/>
            <person name="Murphy L.D."/>
            <person name="Niblett D."/>
            <person name="Odell C."/>
            <person name="Oliver K."/>
            <person name="O'Neil S."/>
            <person name="Pearson D."/>
            <person name="Quail M.A."/>
            <person name="Rabbinowitsch E."/>
            <person name="Rutherford K.M."/>
            <person name="Rutter S."/>
            <person name="Saunders D."/>
            <person name="Seeger K."/>
            <person name="Sharp S."/>
            <person name="Skelton J."/>
            <person name="Simmonds M.N."/>
            <person name="Squares R."/>
            <person name="Squares S."/>
            <person name="Stevens K."/>
            <person name="Taylor K."/>
            <person name="Taylor R.G."/>
            <person name="Tivey A."/>
            <person name="Walsh S.V."/>
            <person name="Warren T."/>
            <person name="Whitehead S."/>
            <person name="Woodward J.R."/>
            <person name="Volckaert G."/>
            <person name="Aert R."/>
            <person name="Robben J."/>
            <person name="Grymonprez B."/>
            <person name="Weltjens I."/>
            <person name="Vanstreels E."/>
            <person name="Rieger M."/>
            <person name="Schaefer M."/>
            <person name="Mueller-Auer S."/>
            <person name="Gabel C."/>
            <person name="Fuchs M."/>
            <person name="Duesterhoeft A."/>
            <person name="Fritzc C."/>
            <person name="Holzer E."/>
            <person name="Moestl D."/>
            <person name="Hilbert H."/>
            <person name="Borzym K."/>
            <person name="Langer I."/>
            <person name="Beck A."/>
            <person name="Lehrach H."/>
            <person name="Reinhardt R."/>
            <person name="Pohl T.M."/>
            <person name="Eger P."/>
            <person name="Zimmermann W."/>
            <person name="Wedler H."/>
            <person name="Wambutt R."/>
            <person name="Purnelle B."/>
            <person name="Goffeau A."/>
            <person name="Cadieu E."/>
            <person name="Dreano S."/>
            <person name="Gloux S."/>
            <person name="Lelaure V."/>
            <person name="Mottier S."/>
            <person name="Galibert F."/>
            <person name="Aves S.J."/>
            <person name="Xiang Z."/>
            <person name="Hunt C."/>
            <person name="Moore K."/>
            <person name="Hurst S.M."/>
            <person name="Lucas M."/>
            <person name="Rochet M."/>
            <person name="Gaillardin C."/>
            <person name="Tallada V.A."/>
            <person name="Garzon A."/>
            <person name="Thode G."/>
            <person name="Daga R.R."/>
            <person name="Cruzado L."/>
            <person name="Jimenez J."/>
            <person name="Sanchez M."/>
            <person name="del Rey F."/>
            <person name="Benito J."/>
            <person name="Dominguez A."/>
            <person name="Revuelta J.L."/>
            <person name="Moreno S."/>
            <person name="Armstrong J."/>
            <person name="Forsburg S.L."/>
            <person name="Cerutti L."/>
            <person name="Lowe T."/>
            <person name="McCombie W.R."/>
            <person name="Paulsen I."/>
            <person name="Potashkin J."/>
            <person name="Shpakovski G.V."/>
            <person name="Ussery D."/>
            <person name="Barrell B.G."/>
            <person name="Nurse P."/>
        </authorList>
    </citation>
    <scope>NUCLEOTIDE SEQUENCE [LARGE SCALE GENOMIC DNA]</scope>
    <source>
        <strain>972 / ATCC 24843</strain>
    </source>
</reference>
<reference key="2">
    <citation type="journal article" date="2006" name="Nat. Biotechnol.">
        <title>ORFeome cloning and global analysis of protein localization in the fission yeast Schizosaccharomyces pombe.</title>
        <authorList>
            <person name="Matsuyama A."/>
            <person name="Arai R."/>
            <person name="Yashiroda Y."/>
            <person name="Shirai A."/>
            <person name="Kamata A."/>
            <person name="Sekido S."/>
            <person name="Kobayashi Y."/>
            <person name="Hashimoto A."/>
            <person name="Hamamoto M."/>
            <person name="Hiraoka Y."/>
            <person name="Horinouchi S."/>
            <person name="Yoshida M."/>
        </authorList>
    </citation>
    <scope>SUBCELLULAR LOCATION [LARGE SCALE ANALYSIS]</scope>
</reference>
<name>YGA3_SCHPO</name>
<comment type="subcellular location">
    <subcellularLocation>
        <location evidence="2">Cytoplasm</location>
    </subcellularLocation>
    <subcellularLocation>
        <location evidence="2">Nucleus</location>
    </subcellularLocation>
</comment>
<comment type="similarity">
    <text evidence="3">Belongs to the pal1 family.</text>
</comment>
<protein>
    <recommendedName>
        <fullName>Uncharacterized protein C6B1.03c</fullName>
    </recommendedName>
</protein>
<feature type="chain" id="PRO_0000343220" description="Uncharacterized protein C6B1.03c">
    <location>
        <begin position="1"/>
        <end position="272"/>
    </location>
</feature>
<feature type="region of interest" description="Disordered" evidence="1">
    <location>
        <begin position="193"/>
        <end position="250"/>
    </location>
</feature>
<feature type="compositionally biased region" description="Low complexity" evidence="1">
    <location>
        <begin position="215"/>
        <end position="233"/>
    </location>
</feature>
<feature type="compositionally biased region" description="Polar residues" evidence="1">
    <location>
        <begin position="235"/>
        <end position="248"/>
    </location>
</feature>
<gene>
    <name type="ORF">SPBC6B1.03c</name>
</gene>
<proteinExistence type="inferred from homology"/>
<organism>
    <name type="scientific">Schizosaccharomyces pombe (strain 972 / ATCC 24843)</name>
    <name type="common">Fission yeast</name>
    <dbReference type="NCBI Taxonomy" id="284812"/>
    <lineage>
        <taxon>Eukaryota</taxon>
        <taxon>Fungi</taxon>
        <taxon>Dikarya</taxon>
        <taxon>Ascomycota</taxon>
        <taxon>Taphrinomycotina</taxon>
        <taxon>Schizosaccharomycetes</taxon>
        <taxon>Schizosaccharomycetales</taxon>
        <taxon>Schizosaccharomycetaceae</taxon>
        <taxon>Schizosaccharomyces</taxon>
    </lineage>
</organism>